<comment type="function">
    <text>Flagellin is the subunit protein which polymerizes to form the filaments of bacterial flagella.</text>
</comment>
<comment type="subcellular location">
    <subcellularLocation>
        <location>Secreted</location>
    </subcellularLocation>
    <subcellularLocation>
        <location>Bacterial flagellum</location>
    </subcellularLocation>
</comment>
<comment type="miscellaneous">
    <text>Individual Salmonella serotypes usually alternate between the production of 2 antigenic forms of flagella, termed phase 1 and phase 2, each specified by separate structural genes.</text>
</comment>
<comment type="similarity">
    <text evidence="1">Belongs to the bacterial flagellin family.</text>
</comment>
<evidence type="ECO:0000305" key="1"/>
<feature type="initiator methionine" description="Removed">
    <location>
        <position position="1"/>
    </location>
</feature>
<feature type="chain" id="PRO_0000182576" description="Flagellin">
    <location>
        <begin position="2"/>
        <end position="493"/>
    </location>
</feature>
<proteinExistence type="inferred from homology"/>
<organism>
    <name type="scientific">Salmonella rubislaw</name>
    <dbReference type="NCBI Taxonomy" id="598"/>
    <lineage>
        <taxon>Bacteria</taxon>
        <taxon>Pseudomonadati</taxon>
        <taxon>Pseudomonadota</taxon>
        <taxon>Gammaproteobacteria</taxon>
        <taxon>Enterobacterales</taxon>
        <taxon>Enterobacteriaceae</taxon>
        <taxon>Salmonella</taxon>
    </lineage>
</organism>
<sequence length="493" mass="51417">MAQVINTNSLSLLTQNNLNKSQSALGTAIERLSSGLRINSAKDDAAGQAIANRFTANIKGLTQASRNANDGISIAQTTEGALNEINNNLQRVRELAVQSANSTNSQSDLDSIQAEITQRLNEIDRVSGQTQFNGVKVLAQDNTLTIQVGANDGETIDIDLKQINSQTLGLDTLNVQQKYKVSDTAATVTGYTDSATAIDKSTFAASATTLGGTPAITGDLKFDDTTGKYYADVSGTTAKDGVYEVTVAADGKVTLTGTPTGPITAGFPSTATKDVKQTQQENADLTEAKAALTAAGVAAAGHRSVVKMSYTDNNGKTIDGGLAVKVGDDYYSATQNKDGSISINTTKYTADNGTSKTALNKLGGADGKTEVVSIGGKTYAASKAEGHNFKAQPDLAEAAATTTENPLQKIDAALAQVDTLRSDLGAVQNRFNSAITNLGNTVNNLTSARSRIEDSDYATEVSNMSRAQILQQAGTSVLAQANQVPQNVLSLLR</sequence>
<protein>
    <recommendedName>
        <fullName>Flagellin</fullName>
    </recommendedName>
    <alternativeName>
        <fullName>Phase 1-R flagellin</fullName>
    </alternativeName>
</protein>
<dbReference type="EMBL" id="X04505">
    <property type="protein sequence ID" value="CAA28190.1"/>
    <property type="molecule type" value="Genomic_DNA"/>
</dbReference>
<dbReference type="PIR" id="S07375">
    <property type="entry name" value="S07375"/>
</dbReference>
<dbReference type="SMR" id="P06175"/>
<dbReference type="GO" id="GO:0009288">
    <property type="term" value="C:bacterial-type flagellum"/>
    <property type="evidence" value="ECO:0007669"/>
    <property type="project" value="UniProtKB-SubCell"/>
</dbReference>
<dbReference type="GO" id="GO:0005576">
    <property type="term" value="C:extracellular region"/>
    <property type="evidence" value="ECO:0007669"/>
    <property type="project" value="UniProtKB-SubCell"/>
</dbReference>
<dbReference type="GO" id="GO:0005198">
    <property type="term" value="F:structural molecule activity"/>
    <property type="evidence" value="ECO:0007669"/>
    <property type="project" value="InterPro"/>
</dbReference>
<dbReference type="Gene3D" id="6.10.280.190">
    <property type="match status" value="1"/>
</dbReference>
<dbReference type="Gene3D" id="2.30.220.10">
    <property type="entry name" value="f41 fragment of flagellin, C-terminal domain"/>
    <property type="match status" value="1"/>
</dbReference>
<dbReference type="Gene3D" id="2.170.280.10">
    <property type="entry name" value="f41 fragment of flagellin, middle domain"/>
    <property type="match status" value="1"/>
</dbReference>
<dbReference type="Gene3D" id="1.20.1330.10">
    <property type="entry name" value="f41 fragment of flagellin, N-terminal domain"/>
    <property type="match status" value="1"/>
</dbReference>
<dbReference type="Gene3D" id="6.10.10.10">
    <property type="entry name" value="Flagellar export chaperone, C-terminal domain"/>
    <property type="match status" value="1"/>
</dbReference>
<dbReference type="InterPro" id="IPR001492">
    <property type="entry name" value="Flagellin"/>
</dbReference>
<dbReference type="InterPro" id="IPR046358">
    <property type="entry name" value="Flagellin_C"/>
</dbReference>
<dbReference type="InterPro" id="IPR042187">
    <property type="entry name" value="Flagellin_C_sub2"/>
</dbReference>
<dbReference type="InterPro" id="IPR014981">
    <property type="entry name" value="Flagellin_D3"/>
</dbReference>
<dbReference type="InterPro" id="IPR001029">
    <property type="entry name" value="Flagellin_N"/>
</dbReference>
<dbReference type="InterPro" id="IPR049365">
    <property type="entry name" value="FLIC_barrel"/>
</dbReference>
<dbReference type="NCBIfam" id="NF005953">
    <property type="entry name" value="PRK08026.1"/>
    <property type="match status" value="1"/>
</dbReference>
<dbReference type="PANTHER" id="PTHR42792">
    <property type="entry name" value="FLAGELLIN"/>
    <property type="match status" value="1"/>
</dbReference>
<dbReference type="PANTHER" id="PTHR42792:SF2">
    <property type="entry name" value="FLAGELLIN"/>
    <property type="match status" value="1"/>
</dbReference>
<dbReference type="Pfam" id="PF00700">
    <property type="entry name" value="Flagellin_C"/>
    <property type="match status" value="1"/>
</dbReference>
<dbReference type="Pfam" id="PF08884">
    <property type="entry name" value="Flagellin_D3"/>
    <property type="match status" value="1"/>
</dbReference>
<dbReference type="Pfam" id="PF00669">
    <property type="entry name" value="Flagellin_N"/>
    <property type="match status" value="1"/>
</dbReference>
<dbReference type="Pfam" id="PF21504">
    <property type="entry name" value="FLIC_barrel"/>
    <property type="match status" value="1"/>
</dbReference>
<dbReference type="PRINTS" id="PR00207">
    <property type="entry name" value="FLAGELLIN"/>
</dbReference>
<dbReference type="SUPFAM" id="SSF64518">
    <property type="entry name" value="Phase 1 flagellin"/>
    <property type="match status" value="1"/>
</dbReference>
<keyword id="KW-0975">Bacterial flagellum</keyword>
<keyword id="KW-0964">Secreted</keyword>
<reference key="1">
    <citation type="journal article" date="1986" name="Nucleic Acids Res.">
        <title>The nucleotide sequence of the H-1r gene of Salmonella rubislaw.</title>
        <authorList>
            <person name="Wei L.-N."/>
            <person name="Joys T.M."/>
        </authorList>
    </citation>
    <scope>NUCLEOTIDE SEQUENCE [GENOMIC DNA]</scope>
    <source>
        <strain>ATCC 10717 / ETS 102</strain>
    </source>
</reference>
<gene>
    <name type="primary">fliC</name>
    <name type="synonym">flaF</name>
    <name type="synonym">hag</name>
</gene>
<accession>P06175</accession>
<name>FLIC_SALRU</name>